<reference key="1">
    <citation type="submission" date="2007-04" db="EMBL/GenBank/DDBJ databases">
        <title>Complete sequence of Pyrobaculum arsenaticum DSM 13514.</title>
        <authorList>
            <consortium name="US DOE Joint Genome Institute"/>
            <person name="Copeland A."/>
            <person name="Lucas S."/>
            <person name="Lapidus A."/>
            <person name="Barry K."/>
            <person name="Glavina del Rio T."/>
            <person name="Dalin E."/>
            <person name="Tice H."/>
            <person name="Pitluck S."/>
            <person name="Chain P."/>
            <person name="Malfatti S."/>
            <person name="Shin M."/>
            <person name="Vergez L."/>
            <person name="Schmutz J."/>
            <person name="Larimer F."/>
            <person name="Land M."/>
            <person name="Hauser L."/>
            <person name="Kyrpides N."/>
            <person name="Mikhailova N."/>
            <person name="Cozen A.E."/>
            <person name="Fitz-Gibbon S.T."/>
            <person name="House C.H."/>
            <person name="Saltikov C."/>
            <person name="Lowe T.M."/>
            <person name="Richardson P."/>
        </authorList>
    </citation>
    <scope>NUCLEOTIDE SEQUENCE [LARGE SCALE GENOMIC DNA]</scope>
    <source>
        <strain>ATCC 700994 / DSM 13514 / JCM 11321 / PZ6</strain>
    </source>
</reference>
<name>RL24E_PYRAR</name>
<feature type="chain" id="PRO_1000017358" description="Large ribosomal subunit protein eL24">
    <location>
        <begin position="1"/>
        <end position="65"/>
    </location>
</feature>
<feature type="zinc finger region" description="C4-type" evidence="1">
    <location>
        <begin position="6"/>
        <end position="36"/>
    </location>
</feature>
<feature type="binding site" evidence="1">
    <location>
        <position position="6"/>
    </location>
    <ligand>
        <name>Zn(2+)</name>
        <dbReference type="ChEBI" id="CHEBI:29105"/>
    </ligand>
</feature>
<feature type="binding site" evidence="1">
    <location>
        <position position="9"/>
    </location>
    <ligand>
        <name>Zn(2+)</name>
        <dbReference type="ChEBI" id="CHEBI:29105"/>
    </ligand>
</feature>
<feature type="binding site" evidence="1">
    <location>
        <position position="32"/>
    </location>
    <ligand>
        <name>Zn(2+)</name>
        <dbReference type="ChEBI" id="CHEBI:29105"/>
    </ligand>
</feature>
<feature type="binding site" evidence="1">
    <location>
        <position position="36"/>
    </location>
    <ligand>
        <name>Zn(2+)</name>
        <dbReference type="ChEBI" id="CHEBI:29105"/>
    </ligand>
</feature>
<proteinExistence type="inferred from homology"/>
<protein>
    <recommendedName>
        <fullName evidence="1">Large ribosomal subunit protein eL24</fullName>
    </recommendedName>
    <alternativeName>
        <fullName evidence="2">50S ribosomal protein L24e</fullName>
    </alternativeName>
</protein>
<dbReference type="EMBL" id="CP000660">
    <property type="protein sequence ID" value="ABP51309.1"/>
    <property type="molecule type" value="Genomic_DNA"/>
</dbReference>
<dbReference type="SMR" id="A4WLP2"/>
<dbReference type="STRING" id="340102.Pars_1758"/>
<dbReference type="KEGG" id="pas:Pars_1758"/>
<dbReference type="HOGENOM" id="CLU_190191_0_0_2"/>
<dbReference type="OrthoDB" id="55506at2157"/>
<dbReference type="PhylomeDB" id="A4WLP2"/>
<dbReference type="Proteomes" id="UP000001567">
    <property type="component" value="Chromosome"/>
</dbReference>
<dbReference type="GO" id="GO:1990904">
    <property type="term" value="C:ribonucleoprotein complex"/>
    <property type="evidence" value="ECO:0007669"/>
    <property type="project" value="UniProtKB-KW"/>
</dbReference>
<dbReference type="GO" id="GO:0005840">
    <property type="term" value="C:ribosome"/>
    <property type="evidence" value="ECO:0007669"/>
    <property type="project" value="UniProtKB-KW"/>
</dbReference>
<dbReference type="GO" id="GO:0019843">
    <property type="term" value="F:rRNA binding"/>
    <property type="evidence" value="ECO:0007669"/>
    <property type="project" value="UniProtKB-UniRule"/>
</dbReference>
<dbReference type="GO" id="GO:0003735">
    <property type="term" value="F:structural constituent of ribosome"/>
    <property type="evidence" value="ECO:0007669"/>
    <property type="project" value="InterPro"/>
</dbReference>
<dbReference type="GO" id="GO:0008270">
    <property type="term" value="F:zinc ion binding"/>
    <property type="evidence" value="ECO:0007669"/>
    <property type="project" value="UniProtKB-UniRule"/>
</dbReference>
<dbReference type="GO" id="GO:0006412">
    <property type="term" value="P:translation"/>
    <property type="evidence" value="ECO:0007669"/>
    <property type="project" value="UniProtKB-UniRule"/>
</dbReference>
<dbReference type="CDD" id="cd00472">
    <property type="entry name" value="Ribosomal_L24e_L24"/>
    <property type="match status" value="1"/>
</dbReference>
<dbReference type="Gene3D" id="2.30.170.20">
    <property type="entry name" value="Ribosomal protein L24e"/>
    <property type="match status" value="1"/>
</dbReference>
<dbReference type="HAMAP" id="MF_00773">
    <property type="entry name" value="Ribosomal_eL24"/>
    <property type="match status" value="1"/>
</dbReference>
<dbReference type="InterPro" id="IPR038630">
    <property type="entry name" value="L24e/L24_sf"/>
</dbReference>
<dbReference type="InterPro" id="IPR056366">
    <property type="entry name" value="Ribosomal_eL24"/>
</dbReference>
<dbReference type="InterPro" id="IPR055345">
    <property type="entry name" value="Ribosomal_eL24-rel_arc"/>
</dbReference>
<dbReference type="InterPro" id="IPR000988">
    <property type="entry name" value="Ribosomal_eL24-rel_N"/>
</dbReference>
<dbReference type="InterPro" id="IPR023442">
    <property type="entry name" value="Ribosomal_eL24_CS"/>
</dbReference>
<dbReference type="InterPro" id="IPR011017">
    <property type="entry name" value="TRASH_dom"/>
</dbReference>
<dbReference type="NCBIfam" id="NF034186">
    <property type="entry name" value="PRK14891.1-1"/>
    <property type="match status" value="1"/>
</dbReference>
<dbReference type="PANTHER" id="PTHR10792">
    <property type="entry name" value="60S RIBOSOMAL PROTEIN L24"/>
    <property type="match status" value="1"/>
</dbReference>
<dbReference type="PANTHER" id="PTHR10792:SF1">
    <property type="entry name" value="RIBOSOMAL PROTEIN L24"/>
    <property type="match status" value="1"/>
</dbReference>
<dbReference type="Pfam" id="PF01246">
    <property type="entry name" value="Ribosomal_L24e"/>
    <property type="match status" value="1"/>
</dbReference>
<dbReference type="SMART" id="SM00746">
    <property type="entry name" value="TRASH"/>
    <property type="match status" value="1"/>
</dbReference>
<dbReference type="SUPFAM" id="SSF57716">
    <property type="entry name" value="Glucocorticoid receptor-like (DNA-binding domain)"/>
    <property type="match status" value="1"/>
</dbReference>
<dbReference type="PROSITE" id="PS01073">
    <property type="entry name" value="RIBOSOMAL_L24E"/>
    <property type="match status" value="1"/>
</dbReference>
<comment type="function">
    <text evidence="1">Binds to the 23S rRNA.</text>
</comment>
<comment type="cofactor">
    <cofactor evidence="1">
        <name>Zn(2+)</name>
        <dbReference type="ChEBI" id="CHEBI:29105"/>
    </cofactor>
    <text evidence="1">Binds 1 zinc ion per subunit.</text>
</comment>
<comment type="subunit">
    <text evidence="1">Part of the 50S ribosomal subunit. Forms a cluster with proteins L3 and L14.</text>
</comment>
<comment type="similarity">
    <text evidence="1">Belongs to the eukaryotic ribosomal protein eL24 family.</text>
</comment>
<gene>
    <name evidence="1" type="primary">rpl24e</name>
    <name type="ordered locus">Pars_1758</name>
</gene>
<evidence type="ECO:0000255" key="1">
    <source>
        <dbReference type="HAMAP-Rule" id="MF_00773"/>
    </source>
</evidence>
<evidence type="ECO:0000305" key="2"/>
<keyword id="KW-0479">Metal-binding</keyword>
<keyword id="KW-0687">Ribonucleoprotein</keyword>
<keyword id="KW-0689">Ribosomal protein</keyword>
<keyword id="KW-0694">RNA-binding</keyword>
<keyword id="KW-0699">rRNA-binding</keyword>
<keyword id="KW-0862">Zinc</keyword>
<keyword id="KW-0863">Zinc-finger</keyword>
<sequence length="65" mass="7484">MKIYQCAFCGADIPPGYGIMYVKSDGTVLRYCSRKCFVSATKYGRNPRKLAWVRKLQRKQKQSTS</sequence>
<accession>A4WLP2</accession>
<organism>
    <name type="scientific">Pyrobaculum arsenaticum (strain DSM 13514 / JCM 11321 / PZ6)</name>
    <dbReference type="NCBI Taxonomy" id="340102"/>
    <lineage>
        <taxon>Archaea</taxon>
        <taxon>Thermoproteota</taxon>
        <taxon>Thermoprotei</taxon>
        <taxon>Thermoproteales</taxon>
        <taxon>Thermoproteaceae</taxon>
        <taxon>Pyrobaculum</taxon>
    </lineage>
</organism>